<name>MURD_ROSS1</name>
<protein>
    <recommendedName>
        <fullName evidence="1">UDP-N-acetylmuramoylalanine--D-glutamate ligase</fullName>
        <ecNumber evidence="1">6.3.2.9</ecNumber>
    </recommendedName>
    <alternativeName>
        <fullName evidence="1">D-glutamic acid-adding enzyme</fullName>
    </alternativeName>
    <alternativeName>
        <fullName evidence="1">UDP-N-acetylmuramoyl-L-alanyl-D-glutamate synthetase</fullName>
    </alternativeName>
</protein>
<comment type="function">
    <text evidence="1">Cell wall formation. Catalyzes the addition of glutamate to the nucleotide precursor UDP-N-acetylmuramoyl-L-alanine (UMA).</text>
</comment>
<comment type="catalytic activity">
    <reaction evidence="1">
        <text>UDP-N-acetyl-alpha-D-muramoyl-L-alanine + D-glutamate + ATP = UDP-N-acetyl-alpha-D-muramoyl-L-alanyl-D-glutamate + ADP + phosphate + H(+)</text>
        <dbReference type="Rhea" id="RHEA:16429"/>
        <dbReference type="ChEBI" id="CHEBI:15378"/>
        <dbReference type="ChEBI" id="CHEBI:29986"/>
        <dbReference type="ChEBI" id="CHEBI:30616"/>
        <dbReference type="ChEBI" id="CHEBI:43474"/>
        <dbReference type="ChEBI" id="CHEBI:83898"/>
        <dbReference type="ChEBI" id="CHEBI:83900"/>
        <dbReference type="ChEBI" id="CHEBI:456216"/>
        <dbReference type="EC" id="6.3.2.9"/>
    </reaction>
</comment>
<comment type="pathway">
    <text evidence="1">Cell wall biogenesis; peptidoglycan biosynthesis.</text>
</comment>
<comment type="subcellular location">
    <subcellularLocation>
        <location evidence="1">Cytoplasm</location>
    </subcellularLocation>
</comment>
<comment type="similarity">
    <text evidence="1">Belongs to the MurCDEF family.</text>
</comment>
<feature type="chain" id="PRO_1000056887" description="UDP-N-acetylmuramoylalanine--D-glutamate ligase">
    <location>
        <begin position="1"/>
        <end position="466"/>
    </location>
</feature>
<feature type="binding site" evidence="1">
    <location>
        <begin position="117"/>
        <end position="123"/>
    </location>
    <ligand>
        <name>ATP</name>
        <dbReference type="ChEBI" id="CHEBI:30616"/>
    </ligand>
</feature>
<keyword id="KW-0067">ATP-binding</keyword>
<keyword id="KW-0131">Cell cycle</keyword>
<keyword id="KW-0132">Cell division</keyword>
<keyword id="KW-0133">Cell shape</keyword>
<keyword id="KW-0961">Cell wall biogenesis/degradation</keyword>
<keyword id="KW-0963">Cytoplasm</keyword>
<keyword id="KW-0436">Ligase</keyword>
<keyword id="KW-0547">Nucleotide-binding</keyword>
<keyword id="KW-0573">Peptidoglycan synthesis</keyword>
<dbReference type="EC" id="6.3.2.9" evidence="1"/>
<dbReference type="EMBL" id="CP000686">
    <property type="protein sequence ID" value="ABQ92137.1"/>
    <property type="molecule type" value="Genomic_DNA"/>
</dbReference>
<dbReference type="RefSeq" id="WP_011958479.1">
    <property type="nucleotide sequence ID" value="NC_009523.1"/>
</dbReference>
<dbReference type="SMR" id="A5UZT4"/>
<dbReference type="STRING" id="357808.RoseRS_3783"/>
<dbReference type="KEGG" id="rrs:RoseRS_3783"/>
<dbReference type="eggNOG" id="COG0771">
    <property type="taxonomic scope" value="Bacteria"/>
</dbReference>
<dbReference type="HOGENOM" id="CLU_032540_0_0_0"/>
<dbReference type="OrthoDB" id="9809796at2"/>
<dbReference type="UniPathway" id="UPA00219"/>
<dbReference type="Proteomes" id="UP000006554">
    <property type="component" value="Chromosome"/>
</dbReference>
<dbReference type="GO" id="GO:0005737">
    <property type="term" value="C:cytoplasm"/>
    <property type="evidence" value="ECO:0007669"/>
    <property type="project" value="UniProtKB-SubCell"/>
</dbReference>
<dbReference type="GO" id="GO:0005524">
    <property type="term" value="F:ATP binding"/>
    <property type="evidence" value="ECO:0007669"/>
    <property type="project" value="UniProtKB-UniRule"/>
</dbReference>
<dbReference type="GO" id="GO:0008764">
    <property type="term" value="F:UDP-N-acetylmuramoylalanine-D-glutamate ligase activity"/>
    <property type="evidence" value="ECO:0007669"/>
    <property type="project" value="UniProtKB-UniRule"/>
</dbReference>
<dbReference type="GO" id="GO:0051301">
    <property type="term" value="P:cell division"/>
    <property type="evidence" value="ECO:0007669"/>
    <property type="project" value="UniProtKB-KW"/>
</dbReference>
<dbReference type="GO" id="GO:0071555">
    <property type="term" value="P:cell wall organization"/>
    <property type="evidence" value="ECO:0007669"/>
    <property type="project" value="UniProtKB-KW"/>
</dbReference>
<dbReference type="GO" id="GO:0009252">
    <property type="term" value="P:peptidoglycan biosynthetic process"/>
    <property type="evidence" value="ECO:0007669"/>
    <property type="project" value="UniProtKB-UniRule"/>
</dbReference>
<dbReference type="GO" id="GO:0008360">
    <property type="term" value="P:regulation of cell shape"/>
    <property type="evidence" value="ECO:0007669"/>
    <property type="project" value="UniProtKB-KW"/>
</dbReference>
<dbReference type="Gene3D" id="3.90.190.20">
    <property type="entry name" value="Mur ligase, C-terminal domain"/>
    <property type="match status" value="1"/>
</dbReference>
<dbReference type="Gene3D" id="3.40.1190.10">
    <property type="entry name" value="Mur-like, catalytic domain"/>
    <property type="match status" value="1"/>
</dbReference>
<dbReference type="Gene3D" id="3.40.50.720">
    <property type="entry name" value="NAD(P)-binding Rossmann-like Domain"/>
    <property type="match status" value="1"/>
</dbReference>
<dbReference type="HAMAP" id="MF_00639">
    <property type="entry name" value="MurD"/>
    <property type="match status" value="1"/>
</dbReference>
<dbReference type="InterPro" id="IPR036565">
    <property type="entry name" value="Mur-like_cat_sf"/>
</dbReference>
<dbReference type="InterPro" id="IPR004101">
    <property type="entry name" value="Mur_ligase_C"/>
</dbReference>
<dbReference type="InterPro" id="IPR036615">
    <property type="entry name" value="Mur_ligase_C_dom_sf"/>
</dbReference>
<dbReference type="InterPro" id="IPR013221">
    <property type="entry name" value="Mur_ligase_cen"/>
</dbReference>
<dbReference type="InterPro" id="IPR005762">
    <property type="entry name" value="MurD"/>
</dbReference>
<dbReference type="NCBIfam" id="TIGR01087">
    <property type="entry name" value="murD"/>
    <property type="match status" value="1"/>
</dbReference>
<dbReference type="PANTHER" id="PTHR43692">
    <property type="entry name" value="UDP-N-ACETYLMURAMOYLALANINE--D-GLUTAMATE LIGASE"/>
    <property type="match status" value="1"/>
</dbReference>
<dbReference type="PANTHER" id="PTHR43692:SF1">
    <property type="entry name" value="UDP-N-ACETYLMURAMOYLALANINE--D-GLUTAMATE LIGASE"/>
    <property type="match status" value="1"/>
</dbReference>
<dbReference type="Pfam" id="PF02875">
    <property type="entry name" value="Mur_ligase_C"/>
    <property type="match status" value="1"/>
</dbReference>
<dbReference type="Pfam" id="PF08245">
    <property type="entry name" value="Mur_ligase_M"/>
    <property type="match status" value="1"/>
</dbReference>
<dbReference type="Pfam" id="PF21799">
    <property type="entry name" value="MurD-like_N"/>
    <property type="match status" value="1"/>
</dbReference>
<dbReference type="SUPFAM" id="SSF51984">
    <property type="entry name" value="MurCD N-terminal domain"/>
    <property type="match status" value="1"/>
</dbReference>
<dbReference type="SUPFAM" id="SSF53623">
    <property type="entry name" value="MurD-like peptide ligases, catalytic domain"/>
    <property type="match status" value="1"/>
</dbReference>
<dbReference type="SUPFAM" id="SSF53244">
    <property type="entry name" value="MurD-like peptide ligases, peptide-binding domain"/>
    <property type="match status" value="1"/>
</dbReference>
<gene>
    <name evidence="1" type="primary">murD</name>
    <name type="ordered locus">RoseRS_3783</name>
</gene>
<proteinExistence type="inferred from homology"/>
<organism>
    <name type="scientific">Roseiflexus sp. (strain RS-1)</name>
    <dbReference type="NCBI Taxonomy" id="357808"/>
    <lineage>
        <taxon>Bacteria</taxon>
        <taxon>Bacillati</taxon>
        <taxon>Chloroflexota</taxon>
        <taxon>Chloroflexia</taxon>
        <taxon>Chloroflexales</taxon>
        <taxon>Roseiflexineae</taxon>
        <taxon>Roseiflexaceae</taxon>
        <taxon>Roseiflexus</taxon>
    </lineage>
</organism>
<reference key="1">
    <citation type="submission" date="2007-04" db="EMBL/GenBank/DDBJ databases">
        <title>Complete sequence of Roseiflexus sp. RS-1.</title>
        <authorList>
            <consortium name="US DOE Joint Genome Institute"/>
            <person name="Copeland A."/>
            <person name="Lucas S."/>
            <person name="Lapidus A."/>
            <person name="Barry K."/>
            <person name="Detter J.C."/>
            <person name="Glavina del Rio T."/>
            <person name="Hammon N."/>
            <person name="Israni S."/>
            <person name="Dalin E."/>
            <person name="Tice H."/>
            <person name="Pitluck S."/>
            <person name="Chertkov O."/>
            <person name="Brettin T."/>
            <person name="Bruce D."/>
            <person name="Han C."/>
            <person name="Schmutz J."/>
            <person name="Larimer F."/>
            <person name="Land M."/>
            <person name="Hauser L."/>
            <person name="Kyrpides N."/>
            <person name="Mikhailova N."/>
            <person name="Bryant D.A."/>
            <person name="Richardson P."/>
        </authorList>
    </citation>
    <scope>NUCLEOTIDE SEQUENCE [LARGE SCALE GENOMIC DNA]</scope>
    <source>
        <strain>RS-1</strain>
    </source>
</reference>
<evidence type="ECO:0000255" key="1">
    <source>
        <dbReference type="HAMAP-Rule" id="MF_00639"/>
    </source>
</evidence>
<sequence length="466" mass="50077">MQLAGKRALVMGLGVHGGGTGVARFLALQGADVTVTDLRGPDDLRASLDALAGLPIRFVLGEHRDDDFRRAEIVVRNPAVPPNSRYLQIARAAGATIEMEMTIFFRLCPGPILGVTGTKGKTTTTLLLGAMLREQFPDTVIAGNLRISALEQLPTITATTPVVLELSSFALEGLGEAGLSPKIACITTIAPDHLDRHGTMEAYILAKEQIWRHQRPGDAVALNADSPIIRAMAVVEQRPDDVVWFASAAHPALAHAGRAAFWQGDELVWRDHRGGRHVICTRDDVQLRGTHNLGNIAAATAAACSFGVAPDHIRRAVQTFPGVEHRLELVRELDGVRYVNDTAATAPEAAIAALRTFDDPIVLIAGGADKQLPFDDLAREIAGRVKAVVLVDGTATPKLQRALRLVDPSVDVCGPFDDFERAVIAARHIAAPGDIVLLSPGCASFGMFRNEFHRGEAFRRIVESFT</sequence>
<accession>A5UZT4</accession>